<sequence>MNVSVNIKNVTKEYRIYRTNKERMKDALIPKHKNKTFFALDDISLKAYEGDVIGLVGINGSGKSTLSNIIGGSLSPTVGKVDRNGEVSVIAISAGLSGQLTGIENIEFKMLCMGFKRKEIKAMTPKIIEFSELGEFIYQPVKKYSSGMRAKLGFSINITVNPDILVIDEALSVGDQTFAQKCLDKIYEFKEQNKTIFFVSHNLGQVRQFCTKIAWIEGGKLKDYGELDDVLPKYEAFLNDFKKKSKAEQKEFRNKLDESRFVIK</sequence>
<reference key="1">
    <citation type="journal article" date="2004" name="Proc. Natl. Acad. Sci. U.S.A.">
        <title>Complete genomes of two clinical Staphylococcus aureus strains: evidence for the rapid evolution of virulence and drug resistance.</title>
        <authorList>
            <person name="Holden M.T.G."/>
            <person name="Feil E.J."/>
            <person name="Lindsay J.A."/>
            <person name="Peacock S.J."/>
            <person name="Day N.P.J."/>
            <person name="Enright M.C."/>
            <person name="Foster T.J."/>
            <person name="Moore C.E."/>
            <person name="Hurst L."/>
            <person name="Atkin R."/>
            <person name="Barron A."/>
            <person name="Bason N."/>
            <person name="Bentley S.D."/>
            <person name="Chillingworth C."/>
            <person name="Chillingworth T."/>
            <person name="Churcher C."/>
            <person name="Clark L."/>
            <person name="Corton C."/>
            <person name="Cronin A."/>
            <person name="Doggett J."/>
            <person name="Dowd L."/>
            <person name="Feltwell T."/>
            <person name="Hance Z."/>
            <person name="Harris B."/>
            <person name="Hauser H."/>
            <person name="Holroyd S."/>
            <person name="Jagels K."/>
            <person name="James K.D."/>
            <person name="Lennard N."/>
            <person name="Line A."/>
            <person name="Mayes R."/>
            <person name="Moule S."/>
            <person name="Mungall K."/>
            <person name="Ormond D."/>
            <person name="Quail M.A."/>
            <person name="Rabbinowitsch E."/>
            <person name="Rutherford K.M."/>
            <person name="Sanders M."/>
            <person name="Sharp S."/>
            <person name="Simmonds M."/>
            <person name="Stevens K."/>
            <person name="Whitehead S."/>
            <person name="Barrell B.G."/>
            <person name="Spratt B.G."/>
            <person name="Parkhill J."/>
        </authorList>
    </citation>
    <scope>NUCLEOTIDE SEQUENCE [LARGE SCALE GENOMIC DNA]</scope>
    <source>
        <strain>MSSA476</strain>
    </source>
</reference>
<proteinExistence type="inferred from homology"/>
<feature type="chain" id="PRO_0000092999" description="Teichoic acids export ATP-binding protein TagH">
    <location>
        <begin position="1"/>
        <end position="264"/>
    </location>
</feature>
<feature type="domain" description="ABC transporter" evidence="1">
    <location>
        <begin position="5"/>
        <end position="243"/>
    </location>
</feature>
<feature type="binding site" evidence="1">
    <location>
        <begin position="57"/>
        <end position="64"/>
    </location>
    <ligand>
        <name>ATP</name>
        <dbReference type="ChEBI" id="CHEBI:30616"/>
    </ligand>
</feature>
<protein>
    <recommendedName>
        <fullName evidence="1">Teichoic acids export ATP-binding protein TagH</fullName>
        <ecNumber evidence="1">7.5.2.4</ecNumber>
    </recommendedName>
</protein>
<comment type="function">
    <text evidence="1">Part of the ABC transporter complex TagGH involved in teichoic acids export. Responsible for energy coupling to the transport system.</text>
</comment>
<comment type="catalytic activity">
    <reaction evidence="1">
        <text>ATP + H2O + teichoic acidSide 1 = ADP + phosphate + teichoic acidSide 2.</text>
        <dbReference type="EC" id="7.5.2.4"/>
    </reaction>
</comment>
<comment type="subunit">
    <text evidence="1">The complex is composed of two ATP-binding proteins (TagH) and two transmembrane proteins (TagG).</text>
</comment>
<comment type="subcellular location">
    <subcellularLocation>
        <location evidence="1">Cell membrane</location>
        <topology evidence="1">Peripheral membrane protein</topology>
    </subcellularLocation>
</comment>
<comment type="similarity">
    <text evidence="1">Belongs to the ABC transporter superfamily. Teichoic acids exporter (TC 3.A.1.104.1) family.</text>
</comment>
<evidence type="ECO:0000255" key="1">
    <source>
        <dbReference type="HAMAP-Rule" id="MF_01715"/>
    </source>
</evidence>
<gene>
    <name evidence="1" type="primary">tagH</name>
    <name type="ordered locus">SAS0603</name>
</gene>
<keyword id="KW-0067">ATP-binding</keyword>
<keyword id="KW-1003">Cell membrane</keyword>
<keyword id="KW-0472">Membrane</keyword>
<keyword id="KW-0547">Nucleotide-binding</keyword>
<keyword id="KW-1278">Translocase</keyword>
<keyword id="KW-0813">Transport</keyword>
<organism>
    <name type="scientific">Staphylococcus aureus (strain MSSA476)</name>
    <dbReference type="NCBI Taxonomy" id="282459"/>
    <lineage>
        <taxon>Bacteria</taxon>
        <taxon>Bacillati</taxon>
        <taxon>Bacillota</taxon>
        <taxon>Bacilli</taxon>
        <taxon>Bacillales</taxon>
        <taxon>Staphylococcaceae</taxon>
        <taxon>Staphylococcus</taxon>
    </lineage>
</organism>
<dbReference type="EC" id="7.5.2.4" evidence="1"/>
<dbReference type="EMBL" id="BX571857">
    <property type="protein sequence ID" value="CAG42378.1"/>
    <property type="molecule type" value="Genomic_DNA"/>
</dbReference>
<dbReference type="RefSeq" id="WP_001103232.1">
    <property type="nucleotide sequence ID" value="NC_002953.3"/>
</dbReference>
<dbReference type="SMR" id="Q6GBJ3"/>
<dbReference type="GeneID" id="98344978"/>
<dbReference type="KEGG" id="sas:SAS0603"/>
<dbReference type="HOGENOM" id="CLU_000604_1_2_9"/>
<dbReference type="GO" id="GO:0005886">
    <property type="term" value="C:plasma membrane"/>
    <property type="evidence" value="ECO:0007669"/>
    <property type="project" value="UniProtKB-SubCell"/>
</dbReference>
<dbReference type="GO" id="GO:0015438">
    <property type="term" value="F:ABC-type teichoic acid transporter activity"/>
    <property type="evidence" value="ECO:0007669"/>
    <property type="project" value="UniProtKB-EC"/>
</dbReference>
<dbReference type="GO" id="GO:0005524">
    <property type="term" value="F:ATP binding"/>
    <property type="evidence" value="ECO:0007669"/>
    <property type="project" value="UniProtKB-KW"/>
</dbReference>
<dbReference type="GO" id="GO:0016887">
    <property type="term" value="F:ATP hydrolysis activity"/>
    <property type="evidence" value="ECO:0007669"/>
    <property type="project" value="InterPro"/>
</dbReference>
<dbReference type="CDD" id="cd03220">
    <property type="entry name" value="ABC_KpsT_Wzt"/>
    <property type="match status" value="1"/>
</dbReference>
<dbReference type="FunFam" id="3.40.50.300:FF:003010">
    <property type="entry name" value="Teichoic acids export ATP-binding protein TagH"/>
    <property type="match status" value="1"/>
</dbReference>
<dbReference type="Gene3D" id="3.40.50.300">
    <property type="entry name" value="P-loop containing nucleotide triphosphate hydrolases"/>
    <property type="match status" value="1"/>
</dbReference>
<dbReference type="InterPro" id="IPR003593">
    <property type="entry name" value="AAA+_ATPase"/>
</dbReference>
<dbReference type="InterPro" id="IPR003439">
    <property type="entry name" value="ABC_transporter-like_ATP-bd"/>
</dbReference>
<dbReference type="InterPro" id="IPR017871">
    <property type="entry name" value="ABC_transporter-like_CS"/>
</dbReference>
<dbReference type="InterPro" id="IPR015860">
    <property type="entry name" value="ABC_transpr_TagH-like"/>
</dbReference>
<dbReference type="InterPro" id="IPR050683">
    <property type="entry name" value="Bact_Polysacc_Export_ATP-bd"/>
</dbReference>
<dbReference type="InterPro" id="IPR027417">
    <property type="entry name" value="P-loop_NTPase"/>
</dbReference>
<dbReference type="NCBIfam" id="NF010066">
    <property type="entry name" value="PRK13546.1"/>
    <property type="match status" value="1"/>
</dbReference>
<dbReference type="PANTHER" id="PTHR46743">
    <property type="entry name" value="TEICHOIC ACIDS EXPORT ATP-BINDING PROTEIN TAGH"/>
    <property type="match status" value="1"/>
</dbReference>
<dbReference type="PANTHER" id="PTHR46743:SF2">
    <property type="entry name" value="TEICHOIC ACIDS EXPORT ATP-BINDING PROTEIN TAGH"/>
    <property type="match status" value="1"/>
</dbReference>
<dbReference type="Pfam" id="PF00005">
    <property type="entry name" value="ABC_tran"/>
    <property type="match status" value="1"/>
</dbReference>
<dbReference type="SMART" id="SM00382">
    <property type="entry name" value="AAA"/>
    <property type="match status" value="1"/>
</dbReference>
<dbReference type="SUPFAM" id="SSF52540">
    <property type="entry name" value="P-loop containing nucleoside triphosphate hydrolases"/>
    <property type="match status" value="1"/>
</dbReference>
<dbReference type="PROSITE" id="PS00211">
    <property type="entry name" value="ABC_TRANSPORTER_1"/>
    <property type="match status" value="1"/>
</dbReference>
<dbReference type="PROSITE" id="PS50893">
    <property type="entry name" value="ABC_TRANSPORTER_2"/>
    <property type="match status" value="1"/>
</dbReference>
<dbReference type="PROSITE" id="PS51251">
    <property type="entry name" value="TAGH"/>
    <property type="match status" value="1"/>
</dbReference>
<accession>Q6GBJ3</accession>
<name>TAGH_STAAS</name>